<organism>
    <name type="scientific">Bacillus cytotoxicus (strain DSM 22905 / CIP 110041 / 391-98 / NVH 391-98)</name>
    <dbReference type="NCBI Taxonomy" id="315749"/>
    <lineage>
        <taxon>Bacteria</taxon>
        <taxon>Bacillati</taxon>
        <taxon>Bacillota</taxon>
        <taxon>Bacilli</taxon>
        <taxon>Bacillales</taxon>
        <taxon>Bacillaceae</taxon>
        <taxon>Bacillus</taxon>
        <taxon>Bacillus cereus group</taxon>
    </lineage>
</organism>
<sequence length="289" mass="31668">MKLLVKAPAKINLSLDVLGKRQDGYHEVKMIMTTIDLADRLELTELTEDRIEIVSHNRYVPDDQRNLAYQAAKLLKEKYQVKQGVSIAIEKTIPVAAGLAGGSSDAAATLRGLNKIWNLGLTMDELAELGAEIGSDVSFCVYGGTAIATGRGEKIEHIKTPPSCWVILAKPHIGVSTADVYGNLKLNRVTHPDVDQMAEAINRGDYQGICNAVGNVLEDVTFAMHPEVARIKTRMKRFGADAVLMSGSGPTVFGLVHHDSRMHRIYNGLKGFCEQVYAVRLLGERETLE</sequence>
<protein>
    <recommendedName>
        <fullName evidence="1">4-diphosphocytidyl-2-C-methyl-D-erythritol kinase</fullName>
        <shortName evidence="1">CMK</shortName>
        <ecNumber evidence="1">2.7.1.148</ecNumber>
    </recommendedName>
    <alternativeName>
        <fullName evidence="1">4-(cytidine-5'-diphospho)-2-C-methyl-D-erythritol kinase</fullName>
    </alternativeName>
</protein>
<dbReference type="EC" id="2.7.1.148" evidence="1"/>
<dbReference type="EMBL" id="CP000764">
    <property type="protein sequence ID" value="ABS20415.1"/>
    <property type="molecule type" value="Genomic_DNA"/>
</dbReference>
<dbReference type="SMR" id="A7GJV7"/>
<dbReference type="STRING" id="315749.Bcer98_0040"/>
<dbReference type="KEGG" id="bcy:Bcer98_0040"/>
<dbReference type="eggNOG" id="COG1947">
    <property type="taxonomic scope" value="Bacteria"/>
</dbReference>
<dbReference type="HOGENOM" id="CLU_053057_1_1_9"/>
<dbReference type="OrthoDB" id="9809438at2"/>
<dbReference type="UniPathway" id="UPA00056">
    <property type="reaction ID" value="UER00094"/>
</dbReference>
<dbReference type="Proteomes" id="UP000002300">
    <property type="component" value="Chromosome"/>
</dbReference>
<dbReference type="GO" id="GO:0050515">
    <property type="term" value="F:4-(cytidine 5'-diphospho)-2-C-methyl-D-erythritol kinase activity"/>
    <property type="evidence" value="ECO:0007669"/>
    <property type="project" value="UniProtKB-UniRule"/>
</dbReference>
<dbReference type="GO" id="GO:0005524">
    <property type="term" value="F:ATP binding"/>
    <property type="evidence" value="ECO:0007669"/>
    <property type="project" value="UniProtKB-UniRule"/>
</dbReference>
<dbReference type="GO" id="GO:0019288">
    <property type="term" value="P:isopentenyl diphosphate biosynthetic process, methylerythritol 4-phosphate pathway"/>
    <property type="evidence" value="ECO:0007669"/>
    <property type="project" value="UniProtKB-UniRule"/>
</dbReference>
<dbReference type="GO" id="GO:0016114">
    <property type="term" value="P:terpenoid biosynthetic process"/>
    <property type="evidence" value="ECO:0007669"/>
    <property type="project" value="InterPro"/>
</dbReference>
<dbReference type="FunFam" id="3.30.230.10:FF:000029">
    <property type="entry name" value="4-diphosphocytidyl-2-C-methyl-D-erythritol kinase"/>
    <property type="match status" value="1"/>
</dbReference>
<dbReference type="FunFam" id="3.30.70.890:FF:000006">
    <property type="entry name" value="4-diphosphocytidyl-2-C-methyl-D-erythritol kinase"/>
    <property type="match status" value="1"/>
</dbReference>
<dbReference type="Gene3D" id="3.30.230.10">
    <property type="match status" value="1"/>
</dbReference>
<dbReference type="Gene3D" id="3.30.70.890">
    <property type="entry name" value="GHMP kinase, C-terminal domain"/>
    <property type="match status" value="1"/>
</dbReference>
<dbReference type="HAMAP" id="MF_00061">
    <property type="entry name" value="IspE"/>
    <property type="match status" value="1"/>
</dbReference>
<dbReference type="InterPro" id="IPR013750">
    <property type="entry name" value="GHMP_kinase_C_dom"/>
</dbReference>
<dbReference type="InterPro" id="IPR036554">
    <property type="entry name" value="GHMP_kinase_C_sf"/>
</dbReference>
<dbReference type="InterPro" id="IPR006204">
    <property type="entry name" value="GHMP_kinase_N_dom"/>
</dbReference>
<dbReference type="InterPro" id="IPR004424">
    <property type="entry name" value="IspE"/>
</dbReference>
<dbReference type="InterPro" id="IPR020568">
    <property type="entry name" value="Ribosomal_Su5_D2-typ_SF"/>
</dbReference>
<dbReference type="InterPro" id="IPR014721">
    <property type="entry name" value="Ribsml_uS5_D2-typ_fold_subgr"/>
</dbReference>
<dbReference type="NCBIfam" id="TIGR00154">
    <property type="entry name" value="ispE"/>
    <property type="match status" value="1"/>
</dbReference>
<dbReference type="NCBIfam" id="NF011202">
    <property type="entry name" value="PRK14608.1"/>
    <property type="match status" value="1"/>
</dbReference>
<dbReference type="PANTHER" id="PTHR43527">
    <property type="entry name" value="4-DIPHOSPHOCYTIDYL-2-C-METHYL-D-ERYTHRITOL KINASE, CHLOROPLASTIC"/>
    <property type="match status" value="1"/>
</dbReference>
<dbReference type="PANTHER" id="PTHR43527:SF2">
    <property type="entry name" value="4-DIPHOSPHOCYTIDYL-2-C-METHYL-D-ERYTHRITOL KINASE, CHLOROPLASTIC"/>
    <property type="match status" value="1"/>
</dbReference>
<dbReference type="Pfam" id="PF08544">
    <property type="entry name" value="GHMP_kinases_C"/>
    <property type="match status" value="1"/>
</dbReference>
<dbReference type="Pfam" id="PF00288">
    <property type="entry name" value="GHMP_kinases_N"/>
    <property type="match status" value="1"/>
</dbReference>
<dbReference type="PIRSF" id="PIRSF010376">
    <property type="entry name" value="IspE"/>
    <property type="match status" value="1"/>
</dbReference>
<dbReference type="SUPFAM" id="SSF55060">
    <property type="entry name" value="GHMP Kinase, C-terminal domain"/>
    <property type="match status" value="1"/>
</dbReference>
<dbReference type="SUPFAM" id="SSF54211">
    <property type="entry name" value="Ribosomal protein S5 domain 2-like"/>
    <property type="match status" value="1"/>
</dbReference>
<accession>A7GJV7</accession>
<keyword id="KW-0067">ATP-binding</keyword>
<keyword id="KW-0414">Isoprene biosynthesis</keyword>
<keyword id="KW-0418">Kinase</keyword>
<keyword id="KW-0547">Nucleotide-binding</keyword>
<keyword id="KW-0808">Transferase</keyword>
<comment type="function">
    <text evidence="1">Catalyzes the phosphorylation of the position 2 hydroxy group of 4-diphosphocytidyl-2C-methyl-D-erythritol.</text>
</comment>
<comment type="catalytic activity">
    <reaction evidence="1">
        <text>4-CDP-2-C-methyl-D-erythritol + ATP = 4-CDP-2-C-methyl-D-erythritol 2-phosphate + ADP + H(+)</text>
        <dbReference type="Rhea" id="RHEA:18437"/>
        <dbReference type="ChEBI" id="CHEBI:15378"/>
        <dbReference type="ChEBI" id="CHEBI:30616"/>
        <dbReference type="ChEBI" id="CHEBI:57823"/>
        <dbReference type="ChEBI" id="CHEBI:57919"/>
        <dbReference type="ChEBI" id="CHEBI:456216"/>
        <dbReference type="EC" id="2.7.1.148"/>
    </reaction>
</comment>
<comment type="pathway">
    <text evidence="1">Isoprenoid biosynthesis; isopentenyl diphosphate biosynthesis via DXP pathway; isopentenyl diphosphate from 1-deoxy-D-xylulose 5-phosphate: step 3/6.</text>
</comment>
<comment type="similarity">
    <text evidence="1">Belongs to the GHMP kinase family. IspE subfamily.</text>
</comment>
<evidence type="ECO:0000255" key="1">
    <source>
        <dbReference type="HAMAP-Rule" id="MF_00061"/>
    </source>
</evidence>
<gene>
    <name evidence="1" type="primary">ispE</name>
    <name type="ordered locus">Bcer98_0040</name>
</gene>
<reference key="1">
    <citation type="journal article" date="2008" name="Chem. Biol. Interact.">
        <title>Extending the Bacillus cereus group genomics to putative food-borne pathogens of different toxicity.</title>
        <authorList>
            <person name="Lapidus A."/>
            <person name="Goltsman E."/>
            <person name="Auger S."/>
            <person name="Galleron N."/>
            <person name="Segurens B."/>
            <person name="Dossat C."/>
            <person name="Land M.L."/>
            <person name="Broussolle V."/>
            <person name="Brillard J."/>
            <person name="Guinebretiere M.-H."/>
            <person name="Sanchis V."/>
            <person name="Nguen-the C."/>
            <person name="Lereclus D."/>
            <person name="Richardson P."/>
            <person name="Wincker P."/>
            <person name="Weissenbach J."/>
            <person name="Ehrlich S.D."/>
            <person name="Sorokin A."/>
        </authorList>
    </citation>
    <scope>NUCLEOTIDE SEQUENCE [LARGE SCALE GENOMIC DNA]</scope>
    <source>
        <strain>DSM 22905 / CIP 110041 / 391-98 / NVH 391-98</strain>
    </source>
</reference>
<feature type="chain" id="PRO_1000075042" description="4-diphosphocytidyl-2-C-methyl-D-erythritol kinase">
    <location>
        <begin position="1"/>
        <end position="289"/>
    </location>
</feature>
<feature type="active site" evidence="1">
    <location>
        <position position="10"/>
    </location>
</feature>
<feature type="active site" evidence="1">
    <location>
        <position position="136"/>
    </location>
</feature>
<feature type="binding site" evidence="1">
    <location>
        <begin position="94"/>
        <end position="104"/>
    </location>
    <ligand>
        <name>ATP</name>
        <dbReference type="ChEBI" id="CHEBI:30616"/>
    </ligand>
</feature>
<proteinExistence type="inferred from homology"/>
<name>ISPE_BACCN</name>